<reference key="1">
    <citation type="journal article" date="1991" name="Proc. Natl. Acad. Sci. U.S.A.">
        <title>Two genes encoding 1-aminocyclopropane-1-carboxylate synthase in zucchini (Cucurbita pepo) are clustered and similar but differentially regulated.</title>
        <authorList>
            <person name="Huang P.-L."/>
            <person name="Parks J.E."/>
            <person name="Rottman W.H."/>
            <person name="Theologis A."/>
        </authorList>
    </citation>
    <scope>NUCLEOTIDE SEQUENCE [GENOMIC DNA]</scope>
</reference>
<name>1A12_CUCPE</name>
<organism>
    <name type="scientific">Cucurbita pepo</name>
    <name type="common">Vegetable marrow</name>
    <name type="synonym">Summer squash</name>
    <dbReference type="NCBI Taxonomy" id="3663"/>
    <lineage>
        <taxon>Eukaryota</taxon>
        <taxon>Viridiplantae</taxon>
        <taxon>Streptophyta</taxon>
        <taxon>Embryophyta</taxon>
        <taxon>Tracheophyta</taxon>
        <taxon>Spermatophyta</taxon>
        <taxon>Magnoliopsida</taxon>
        <taxon>eudicotyledons</taxon>
        <taxon>Gunneridae</taxon>
        <taxon>Pentapetalae</taxon>
        <taxon>rosids</taxon>
        <taxon>fabids</taxon>
        <taxon>Cucurbitales</taxon>
        <taxon>Cucurbitaceae</taxon>
        <taxon>Cucurbiteae</taxon>
        <taxon>Cucurbita</taxon>
    </lineage>
</organism>
<gene>
    <name type="primary">ACS2</name>
    <name type="synonym">ACC1B</name>
</gene>
<proteinExistence type="evidence at transcript level"/>
<protein>
    <recommendedName>
        <fullName>1-aminocyclopropane-1-carboxylate synthase 2</fullName>
        <shortName>ACC synthase 2</shortName>
        <ecNumber>4.4.1.14</ecNumber>
    </recommendedName>
    <alternativeName>
        <fullName>S-adenosyl-L-methionine methylthioadenosine-lyase</fullName>
    </alternativeName>
</protein>
<accession>Q00379</accession>
<keyword id="KW-0266">Ethylene biosynthesis</keyword>
<keyword id="KW-0292">Fruit ripening</keyword>
<keyword id="KW-0456">Lyase</keyword>
<keyword id="KW-0663">Pyridoxal phosphate</keyword>
<keyword id="KW-0949">S-adenosyl-L-methionine</keyword>
<comment type="function">
    <text>Catalyzes the formation of 1-aminocyclopropane-1-carboxylate, a direct precursor of ethylene in higher plants.</text>
</comment>
<comment type="catalytic activity">
    <reaction>
        <text>S-adenosyl-L-methionine = 1-aminocyclopropane-1-carboxylate + S-methyl-5'-thioadenosine + H(+)</text>
        <dbReference type="Rhea" id="RHEA:21744"/>
        <dbReference type="ChEBI" id="CHEBI:15378"/>
        <dbReference type="ChEBI" id="CHEBI:17509"/>
        <dbReference type="ChEBI" id="CHEBI:58360"/>
        <dbReference type="ChEBI" id="CHEBI:59789"/>
        <dbReference type="EC" id="4.4.1.14"/>
    </reaction>
</comment>
<comment type="cofactor">
    <cofactor>
        <name>pyridoxal 5'-phosphate</name>
        <dbReference type="ChEBI" id="CHEBI:597326"/>
    </cofactor>
</comment>
<comment type="pathway">
    <text>Alkene biosynthesis; ethylene biosynthesis via S-adenosyl-L-methionine; ethylene from S-adenosyl-L-methionine: step 1/2.</text>
</comment>
<comment type="subunit">
    <text>Homodimer.</text>
</comment>
<comment type="induction">
    <text>Hormones, such as auxin, environmental factors, such as mechanical wounding and a number of chemicals.</text>
</comment>
<comment type="similarity">
    <text evidence="3">Belongs to the class-I pyridoxal-phosphate-dependent aminotransferase family.</text>
</comment>
<feature type="chain" id="PRO_0000123910" description="1-aminocyclopropane-1-carboxylate synthase 2">
    <location>
        <begin position="1"/>
        <end position="494"/>
    </location>
</feature>
<feature type="region of interest" description="Disordered" evidence="2">
    <location>
        <begin position="474"/>
        <end position="494"/>
    </location>
</feature>
<feature type="compositionally biased region" description="Polar residues" evidence="2">
    <location>
        <begin position="475"/>
        <end position="484"/>
    </location>
</feature>
<feature type="modified residue" description="N6-(pyridoxal phosphate)lysine" evidence="1">
    <location>
        <position position="279"/>
    </location>
</feature>
<feature type="sequence conflict" description="In Ref. 1; AAA33112." evidence="3" ref="1">
    <original>A</original>
    <variation>AS</variation>
    <location>
        <position position="345"/>
    </location>
</feature>
<sequence length="494" mass="55923">MGFHQIDERNQALLSKIAIDDGHGENSAYFDGWKAYDNNPFHPENNPLGVIQMGLAENQLSFGMIVDWIRKHPEASICTPEGLEKFKSIANFQDYHGLQEFRKAMASFMGKVRGGRVKFDPSRIVMGGGATGASETVIFCLADPGDAFLVPSPYYAAFDRDLKWRTRAQIIPVHCNSSNNFQVTEAALEIAYKKAQEANMKVKGVIITNPSNPLGTTYDRDTLKTLVTFVNQHDIHLICDEIYSATVFKAPTFTSIAEIVEQMEHCKKELIHILYSLSKDMGLPGFRVGIIYSYNDVVVRRARQMSSFGLVSSQTQHLLAAMLSDEDFVDKFLAENSKRLGERHARFTKELDKMGITCLNSNAGVFVWMDLRRLLKDQTFKAEMELWRVIINEVKLNVSPGSSFHVTEPGWFRVCFANMDDNTVDVALNRIHSFVENIDKKEDNTVAMPSKTRHRDNKLRLSFSFSGRRYDKGNVLNSPHTMSPHSPLVRARTY</sequence>
<dbReference type="EC" id="4.4.1.14"/>
<dbReference type="EMBL" id="M61195">
    <property type="protein sequence ID" value="AAA33112.1"/>
    <property type="molecule type" value="Genomic_DNA"/>
</dbReference>
<dbReference type="PIR" id="B41141">
    <property type="entry name" value="B41141"/>
</dbReference>
<dbReference type="SMR" id="Q00379"/>
<dbReference type="UniPathway" id="UPA00384">
    <property type="reaction ID" value="UER00562"/>
</dbReference>
<dbReference type="GO" id="GO:0016847">
    <property type="term" value="F:1-aminocyclopropane-1-carboxylate synthase activity"/>
    <property type="evidence" value="ECO:0007669"/>
    <property type="project" value="UniProtKB-EC"/>
</dbReference>
<dbReference type="GO" id="GO:0030170">
    <property type="term" value="F:pyridoxal phosphate binding"/>
    <property type="evidence" value="ECO:0007669"/>
    <property type="project" value="InterPro"/>
</dbReference>
<dbReference type="GO" id="GO:0008483">
    <property type="term" value="F:transaminase activity"/>
    <property type="evidence" value="ECO:0007669"/>
    <property type="project" value="TreeGrafter"/>
</dbReference>
<dbReference type="GO" id="GO:0009693">
    <property type="term" value="P:ethylene biosynthetic process"/>
    <property type="evidence" value="ECO:0007669"/>
    <property type="project" value="UniProtKB-UniPathway"/>
</dbReference>
<dbReference type="GO" id="GO:0009835">
    <property type="term" value="P:fruit ripening"/>
    <property type="evidence" value="ECO:0007669"/>
    <property type="project" value="UniProtKB-KW"/>
</dbReference>
<dbReference type="CDD" id="cd00609">
    <property type="entry name" value="AAT_like"/>
    <property type="match status" value="1"/>
</dbReference>
<dbReference type="Gene3D" id="3.90.1150.10">
    <property type="entry name" value="Aspartate Aminotransferase, domain 1"/>
    <property type="match status" value="1"/>
</dbReference>
<dbReference type="Gene3D" id="3.40.640.10">
    <property type="entry name" value="Type I PLP-dependent aspartate aminotransferase-like (Major domain)"/>
    <property type="match status" value="1"/>
</dbReference>
<dbReference type="InterPro" id="IPR004839">
    <property type="entry name" value="Aminotransferase_I/II_large"/>
</dbReference>
<dbReference type="InterPro" id="IPR050478">
    <property type="entry name" value="Ethylene_sulfur-biosynth"/>
</dbReference>
<dbReference type="InterPro" id="IPR004838">
    <property type="entry name" value="NHTrfase_class1_PyrdxlP-BS"/>
</dbReference>
<dbReference type="InterPro" id="IPR015424">
    <property type="entry name" value="PyrdxlP-dep_Trfase"/>
</dbReference>
<dbReference type="InterPro" id="IPR015421">
    <property type="entry name" value="PyrdxlP-dep_Trfase_major"/>
</dbReference>
<dbReference type="InterPro" id="IPR015422">
    <property type="entry name" value="PyrdxlP-dep_Trfase_small"/>
</dbReference>
<dbReference type="PANTHER" id="PTHR43795:SF74">
    <property type="entry name" value="1-AMINOCYCLOPROPANE-1-CARBOXYLATE SYNTHASE-LIKE PROTEIN 1"/>
    <property type="match status" value="1"/>
</dbReference>
<dbReference type="PANTHER" id="PTHR43795">
    <property type="entry name" value="BIFUNCTIONAL ASPARTATE AMINOTRANSFERASE AND GLUTAMATE/ASPARTATE-PREPHENATE AMINOTRANSFERASE-RELATED"/>
    <property type="match status" value="1"/>
</dbReference>
<dbReference type="Pfam" id="PF00155">
    <property type="entry name" value="Aminotran_1_2"/>
    <property type="match status" value="1"/>
</dbReference>
<dbReference type="PRINTS" id="PR00753">
    <property type="entry name" value="ACCSYNTHASE"/>
</dbReference>
<dbReference type="SUPFAM" id="SSF53383">
    <property type="entry name" value="PLP-dependent transferases"/>
    <property type="match status" value="1"/>
</dbReference>
<dbReference type="PROSITE" id="PS00105">
    <property type="entry name" value="AA_TRANSFER_CLASS_1"/>
    <property type="match status" value="1"/>
</dbReference>
<evidence type="ECO:0000250" key="1"/>
<evidence type="ECO:0000256" key="2">
    <source>
        <dbReference type="SAM" id="MobiDB-lite"/>
    </source>
</evidence>
<evidence type="ECO:0000305" key="3"/>